<proteinExistence type="evidence at protein level"/>
<comment type="function">
    <text evidence="2">Component of the cytochrome c oxidase, the last enzyme in the mitochondrial electron transport chain which drives oxidative phosphorylation. The respiratory chain contains 3 multisubunit complexes succinate dehydrogenase (complex II, CII), ubiquinol-cytochrome c oxidoreductase (cytochrome b-c1 complex, complex III, CIII) and cytochrome c oxidase (complex IV, CIV), that cooperate to transfer electrons derived from NADH and succinate to molecular oxygen, creating an electrochemical gradient over the inner membrane that drives transmembrane transport and the ATP synthase. Cytochrome c oxidase is the component of the respiratory chain that catalyzes the reduction of oxygen to water. Electrons originating from reduced cytochrome c in the intermembrane space (IMS) are transferred via the dinuclear copper A center (CU(A)) of Cox2 and heme A of Cox1 to the active site in Cox1, a binuclear center (BNC) formed by heme A3 and copper B (CU(B)). The BNC reduces molecular oxygen to 2 water molecules using 4 electrons from cytochrome c in the IMS and 4 protons from the mitochondrial matrix.</text>
</comment>
<comment type="pathway">
    <text evidence="2">Energy metabolism; oxidative phosphorylation.</text>
</comment>
<comment type="subunit">
    <text evidence="4 5">Component of the cytochrome c oxidase (complex IV, CIV), a multisubunit enzyme composed of 11 subunits. The complex is composed of a catalytic core of 3 subunits Cox1, Cox2 and Cox3, encoded in the mitochondrial DNA, and 8 supernumerary subunits Cox4, Cox5a/Cox5, Cox6, Cox7, Cox8, Cox7a/Cox9, Cox6b/Cox12 and Cox6a/Cox13, which are encoded in the nuclear genome (PubMed:31316820). The complex exists as a monomer or a dimer and forms respiratory supercomplexes (SCs) in the inner mitochondrial membrane with NADH-ubiquinone oxidoreductase (complex I, CI) and ubiquinol-cytochrome c oxidoreductase (cytochrome b-c1 complex, complex III, CIII), resulting in various different assemblies (supercomplexes I(1)IV(1), I(1)III(3)IV(2), III(2)IV(1) and III(2)IV(2) as well as larger supercomplexes of compositions like I(1)III(2)IV(5-6)) (PubMed:17873079).</text>
</comment>
<comment type="subcellular location">
    <subcellularLocation>
        <location evidence="5">Mitochondrion inner membrane</location>
        <topology evidence="5">Peripheral membrane protein</topology>
        <orientation evidence="5">Intermembrane side</orientation>
    </subcellularLocation>
</comment>
<comment type="domain">
    <text evidence="1">The Cx9C/Cx10C motifs are involved in the recognition by the mitochondrial MIA40-ERV1 disulfide relay system and the subsequent transfer of disulfide bonds by dithiol/disulfide exchange reactions to the newly imported protein.</text>
</comment>
<comment type="similarity">
    <text evidence="7">Belongs to the cytochrome c oxidase subunit 6B family.</text>
</comment>
<evidence type="ECO:0000250" key="1"/>
<evidence type="ECO:0000250" key="2">
    <source>
        <dbReference type="UniProtKB" id="Q01519"/>
    </source>
</evidence>
<evidence type="ECO:0000255" key="3">
    <source>
        <dbReference type="PROSITE-ProRule" id="PRU01150"/>
    </source>
</evidence>
<evidence type="ECO:0000269" key="4">
    <source>
    </source>
</evidence>
<evidence type="ECO:0000269" key="5">
    <source>
    </source>
</evidence>
<evidence type="ECO:0000303" key="6">
    <source>
    </source>
</evidence>
<evidence type="ECO:0000305" key="7"/>
<keyword id="KW-1015">Disulfide bond</keyword>
<keyword id="KW-0472">Membrane</keyword>
<keyword id="KW-0496">Mitochondrion</keyword>
<keyword id="KW-0999">Mitochondrion inner membrane</keyword>
<keyword id="KW-1185">Reference proteome</keyword>
<gene>
    <name type="primary">cox-13</name>
    <name type="ORF">NCU06741</name>
</gene>
<name>COX12_NEUCR</name>
<dbReference type="EMBL" id="CM002237">
    <property type="protein sequence ID" value="EAA34277.1"/>
    <property type="molecule type" value="Genomic_DNA"/>
</dbReference>
<dbReference type="RefSeq" id="XP_963513.1">
    <property type="nucleotide sequence ID" value="XM_958420.3"/>
</dbReference>
<dbReference type="SMR" id="Q1K8U2"/>
<dbReference type="FunCoup" id="Q1K8U2">
    <property type="interactions" value="427"/>
</dbReference>
<dbReference type="STRING" id="367110.Q1K8U2"/>
<dbReference type="PaxDb" id="5141-EFNCRP00000006886"/>
<dbReference type="EnsemblFungi" id="EAA34277">
    <property type="protein sequence ID" value="EAA34277"/>
    <property type="gene ID" value="NCU06741"/>
</dbReference>
<dbReference type="GeneID" id="23568465"/>
<dbReference type="KEGG" id="ncr:NCU06741"/>
<dbReference type="VEuPathDB" id="FungiDB:NCU06741"/>
<dbReference type="HOGENOM" id="CLU_133964_1_2_1"/>
<dbReference type="InParanoid" id="Q1K8U2"/>
<dbReference type="OMA" id="NEWIAKW"/>
<dbReference type="OrthoDB" id="1107506at2759"/>
<dbReference type="UniPathway" id="UPA00705"/>
<dbReference type="Proteomes" id="UP000001805">
    <property type="component" value="Chromosome 6, Linkage Group II"/>
</dbReference>
<dbReference type="GO" id="GO:0005743">
    <property type="term" value="C:mitochondrial inner membrane"/>
    <property type="evidence" value="ECO:0007669"/>
    <property type="project" value="UniProtKB-SubCell"/>
</dbReference>
<dbReference type="GO" id="GO:0005739">
    <property type="term" value="C:mitochondrion"/>
    <property type="evidence" value="ECO:0000318"/>
    <property type="project" value="GO_Central"/>
</dbReference>
<dbReference type="GO" id="GO:0045277">
    <property type="term" value="C:respiratory chain complex IV"/>
    <property type="evidence" value="ECO:0007669"/>
    <property type="project" value="InterPro"/>
</dbReference>
<dbReference type="GO" id="GO:0006119">
    <property type="term" value="P:oxidative phosphorylation"/>
    <property type="evidence" value="ECO:0007669"/>
    <property type="project" value="UniProtKB-UniPathway"/>
</dbReference>
<dbReference type="GO" id="GO:1902600">
    <property type="term" value="P:proton transmembrane transport"/>
    <property type="evidence" value="ECO:0007669"/>
    <property type="project" value="GOC"/>
</dbReference>
<dbReference type="CDD" id="cd00926">
    <property type="entry name" value="Cyt_c_Oxidase_VIb"/>
    <property type="match status" value="1"/>
</dbReference>
<dbReference type="FunFam" id="1.10.10.140:FF:000001">
    <property type="entry name" value="Cytochrome c oxidase subunit 6B1"/>
    <property type="match status" value="1"/>
</dbReference>
<dbReference type="Gene3D" id="1.10.10.140">
    <property type="entry name" value="Cytochrome c oxidase, subunit VIb"/>
    <property type="match status" value="1"/>
</dbReference>
<dbReference type="InterPro" id="IPR048280">
    <property type="entry name" value="COX6B-like"/>
</dbReference>
<dbReference type="InterPro" id="IPR036549">
    <property type="entry name" value="CX6/COA6-like_sf"/>
</dbReference>
<dbReference type="InterPro" id="IPR003213">
    <property type="entry name" value="Cyt_c_oxidase_su6B"/>
</dbReference>
<dbReference type="PANTHER" id="PTHR46281:SF8">
    <property type="entry name" value="CYTOCHROME C OXIDASE SUBUNIT 12, MITOCHONDRIAL"/>
    <property type="match status" value="1"/>
</dbReference>
<dbReference type="PANTHER" id="PTHR46281">
    <property type="entry name" value="CYTOCHROME C OXIDASE SUBUNIT 6B"/>
    <property type="match status" value="1"/>
</dbReference>
<dbReference type="Pfam" id="PF02297">
    <property type="entry name" value="COX6B"/>
    <property type="match status" value="1"/>
</dbReference>
<dbReference type="PIRSF" id="PIRSF000278">
    <property type="entry name" value="Cyt_c_oxidase_6B"/>
    <property type="match status" value="1"/>
</dbReference>
<dbReference type="SUPFAM" id="SSF47694">
    <property type="entry name" value="Cytochrome c oxidase subunit h"/>
    <property type="match status" value="1"/>
</dbReference>
<dbReference type="PROSITE" id="PS51808">
    <property type="entry name" value="CHCH"/>
    <property type="match status" value="1"/>
</dbReference>
<reference key="1">
    <citation type="journal article" date="2003" name="Nature">
        <title>The genome sequence of the filamentous fungus Neurospora crassa.</title>
        <authorList>
            <person name="Galagan J.E."/>
            <person name="Calvo S.E."/>
            <person name="Borkovich K.A."/>
            <person name="Selker E.U."/>
            <person name="Read N.D."/>
            <person name="Jaffe D.B."/>
            <person name="FitzHugh W."/>
            <person name="Ma L.-J."/>
            <person name="Smirnov S."/>
            <person name="Purcell S."/>
            <person name="Rehman B."/>
            <person name="Elkins T."/>
            <person name="Engels R."/>
            <person name="Wang S."/>
            <person name="Nielsen C.B."/>
            <person name="Butler J."/>
            <person name="Endrizzi M."/>
            <person name="Qui D."/>
            <person name="Ianakiev P."/>
            <person name="Bell-Pedersen D."/>
            <person name="Nelson M.A."/>
            <person name="Werner-Washburne M."/>
            <person name="Selitrennikoff C.P."/>
            <person name="Kinsey J.A."/>
            <person name="Braun E.L."/>
            <person name="Zelter A."/>
            <person name="Schulte U."/>
            <person name="Kothe G.O."/>
            <person name="Jedd G."/>
            <person name="Mewes H.-W."/>
            <person name="Staben C."/>
            <person name="Marcotte E."/>
            <person name="Greenberg D."/>
            <person name="Roy A."/>
            <person name="Foley K."/>
            <person name="Naylor J."/>
            <person name="Stange-Thomann N."/>
            <person name="Barrett R."/>
            <person name="Gnerre S."/>
            <person name="Kamal M."/>
            <person name="Kamvysselis M."/>
            <person name="Mauceli E.W."/>
            <person name="Bielke C."/>
            <person name="Rudd S."/>
            <person name="Frishman D."/>
            <person name="Krystofova S."/>
            <person name="Rasmussen C."/>
            <person name="Metzenberg R.L."/>
            <person name="Perkins D.D."/>
            <person name="Kroken S."/>
            <person name="Cogoni C."/>
            <person name="Macino G."/>
            <person name="Catcheside D.E.A."/>
            <person name="Li W."/>
            <person name="Pratt R.J."/>
            <person name="Osmani S.A."/>
            <person name="DeSouza C.P.C."/>
            <person name="Glass N.L."/>
            <person name="Orbach M.J."/>
            <person name="Berglund J.A."/>
            <person name="Voelker R."/>
            <person name="Yarden O."/>
            <person name="Plamann M."/>
            <person name="Seiler S."/>
            <person name="Dunlap J.C."/>
            <person name="Radford A."/>
            <person name="Aramayo R."/>
            <person name="Natvig D.O."/>
            <person name="Alex L.A."/>
            <person name="Mannhaupt G."/>
            <person name="Ebbole D.J."/>
            <person name="Freitag M."/>
            <person name="Paulsen I."/>
            <person name="Sachs M.S."/>
            <person name="Lander E.S."/>
            <person name="Nusbaum C."/>
            <person name="Birren B.W."/>
        </authorList>
    </citation>
    <scope>NUCLEOTIDE SEQUENCE [LARGE SCALE GENOMIC DNA]</scope>
    <source>
        <strain>ATCC 24698 / 74-OR23-1A / CBS 708.71 / DSM 1257 / FGSC 987</strain>
    </source>
</reference>
<reference key="2">
    <citation type="journal article" date="2007" name="Eukaryot. Cell">
        <title>Supramolecular organization of the respiratory chain in Neurospora crassa mitochondria.</title>
        <authorList>
            <person name="Marques I."/>
            <person name="Dencher N.A."/>
            <person name="Videira A."/>
            <person name="Krause F."/>
        </authorList>
    </citation>
    <scope>COMPOSITION OF THE CYTOCHROME C OXIDASE COMPLEX</scope>
</reference>
<reference key="3">
    <citation type="journal article" date="2019" name="IUCrJ">
        <title>Cryo-EM structure of Neurospora crassa respiratory complex IV.</title>
        <authorList>
            <person name="Bausewein T."/>
            <person name="Nussberger S."/>
            <person name="Kuehlbrandt W."/>
        </authorList>
    </citation>
    <scope>STRUCTURE BY ELECTRON MICROSCOPY (5.5 ANGSTROMS)</scope>
    <scope>SUBUNIT</scope>
</reference>
<accession>Q1K8U2</accession>
<protein>
    <recommendedName>
        <fullName>Cytochrome c oxidase subunit 12, mitochondrial</fullName>
    </recommendedName>
    <alternativeName>
        <fullName>Cytochrome c oxidase polypeptide VIb</fullName>
    </alternativeName>
    <alternativeName>
        <fullName evidence="6">Cytochrome c oxidase subunit Cox6b</fullName>
    </alternativeName>
</protein>
<feature type="chain" id="PRO_0000448902" description="Cytochrome c oxidase subunit 12, mitochondrial">
    <location>
        <begin position="1"/>
        <end position="84"/>
    </location>
</feature>
<feature type="domain" description="CHCH" evidence="3">
    <location>
        <begin position="27"/>
        <end position="70"/>
    </location>
</feature>
<feature type="short sequence motif" description="Cx9C motif" evidence="3">
    <location>
        <begin position="30"/>
        <end position="40"/>
    </location>
</feature>
<feature type="short sequence motif" description="Cx10C motif" evidence="3">
    <location>
        <begin position="51"/>
        <end position="62"/>
    </location>
</feature>
<feature type="disulfide bond" evidence="3">
    <location>
        <begin position="30"/>
        <end position="62"/>
    </location>
</feature>
<feature type="disulfide bond" evidence="3">
    <location>
        <begin position="40"/>
        <end position="51"/>
    </location>
</feature>
<sequence length="84" mass="10050">MSDDERVTKPFKFVTGVDARFPNVNQTKHCWQNYVDYHKCILAKGEDFAPCRQFWLAYRSLCPSGWYQRWDEQREAGNFPVKLE</sequence>
<organism>
    <name type="scientific">Neurospora crassa (strain ATCC 24698 / 74-OR23-1A / CBS 708.71 / DSM 1257 / FGSC 987)</name>
    <dbReference type="NCBI Taxonomy" id="367110"/>
    <lineage>
        <taxon>Eukaryota</taxon>
        <taxon>Fungi</taxon>
        <taxon>Dikarya</taxon>
        <taxon>Ascomycota</taxon>
        <taxon>Pezizomycotina</taxon>
        <taxon>Sordariomycetes</taxon>
        <taxon>Sordariomycetidae</taxon>
        <taxon>Sordariales</taxon>
        <taxon>Sordariaceae</taxon>
        <taxon>Neurospora</taxon>
    </lineage>
</organism>